<organism>
    <name type="scientific">Aliivibrio fischeri (strain ATCC 700601 / ES114)</name>
    <name type="common">Vibrio fischeri</name>
    <dbReference type="NCBI Taxonomy" id="312309"/>
    <lineage>
        <taxon>Bacteria</taxon>
        <taxon>Pseudomonadati</taxon>
        <taxon>Pseudomonadota</taxon>
        <taxon>Gammaproteobacteria</taxon>
        <taxon>Vibrionales</taxon>
        <taxon>Vibrionaceae</taxon>
        <taxon>Aliivibrio</taxon>
    </lineage>
</organism>
<dbReference type="EMBL" id="CP000020">
    <property type="protein sequence ID" value="AAW86597.1"/>
    <property type="molecule type" value="Genomic_DNA"/>
</dbReference>
<dbReference type="RefSeq" id="WP_011262561.1">
    <property type="nucleotide sequence ID" value="NC_006840.2"/>
</dbReference>
<dbReference type="RefSeq" id="YP_205485.1">
    <property type="nucleotide sequence ID" value="NC_006840.2"/>
</dbReference>
<dbReference type="SMR" id="Q5E2Z9"/>
<dbReference type="STRING" id="312309.VF_2102"/>
<dbReference type="EnsemblBacteria" id="AAW86597">
    <property type="protein sequence ID" value="AAW86597"/>
    <property type="gene ID" value="VF_2102"/>
</dbReference>
<dbReference type="GeneID" id="54164807"/>
<dbReference type="KEGG" id="vfi:VF_2102"/>
<dbReference type="PATRIC" id="fig|312309.11.peg.2144"/>
<dbReference type="eggNOG" id="COG3079">
    <property type="taxonomic scope" value="Bacteria"/>
</dbReference>
<dbReference type="HOGENOM" id="CLU_085336_1_0_6"/>
<dbReference type="OrthoDB" id="9783391at2"/>
<dbReference type="Proteomes" id="UP000000537">
    <property type="component" value="Chromosome I"/>
</dbReference>
<dbReference type="GO" id="GO:0005829">
    <property type="term" value="C:cytosol"/>
    <property type="evidence" value="ECO:0007669"/>
    <property type="project" value="TreeGrafter"/>
</dbReference>
<dbReference type="Gene3D" id="1.20.120.740">
    <property type="entry name" value="YgfB uncharacterised protein family UPF0149, PF03695"/>
    <property type="match status" value="1"/>
</dbReference>
<dbReference type="HAMAP" id="MF_00346">
    <property type="entry name" value="UPF0149"/>
    <property type="match status" value="1"/>
</dbReference>
<dbReference type="InterPro" id="IPR011978">
    <property type="entry name" value="YgfB-like"/>
</dbReference>
<dbReference type="InterPro" id="IPR036255">
    <property type="entry name" value="YgfB-like_sf"/>
</dbReference>
<dbReference type="NCBIfam" id="NF002477">
    <property type="entry name" value="PRK01736.1"/>
    <property type="match status" value="1"/>
</dbReference>
<dbReference type="PANTHER" id="PTHR37528">
    <property type="entry name" value="UPF0149 PROTEIN YGFB"/>
    <property type="match status" value="1"/>
</dbReference>
<dbReference type="PANTHER" id="PTHR37528:SF1">
    <property type="entry name" value="UPF0149 PROTEIN YGFB"/>
    <property type="match status" value="1"/>
</dbReference>
<dbReference type="Pfam" id="PF03695">
    <property type="entry name" value="UPF0149"/>
    <property type="match status" value="1"/>
</dbReference>
<dbReference type="SUPFAM" id="SSF101327">
    <property type="entry name" value="YgfB-like"/>
    <property type="match status" value="1"/>
</dbReference>
<accession>Q5E2Z9</accession>
<feature type="chain" id="PRO_1000013049" description="UPF0149 protein VF_2102">
    <location>
        <begin position="1"/>
        <end position="189"/>
    </location>
</feature>
<reference key="1">
    <citation type="journal article" date="2005" name="Proc. Natl. Acad. Sci. U.S.A.">
        <title>Complete genome sequence of Vibrio fischeri: a symbiotic bacterium with pathogenic congeners.</title>
        <authorList>
            <person name="Ruby E.G."/>
            <person name="Urbanowski M."/>
            <person name="Campbell J."/>
            <person name="Dunn A."/>
            <person name="Faini M."/>
            <person name="Gunsalus R."/>
            <person name="Lostroh P."/>
            <person name="Lupp C."/>
            <person name="McCann J."/>
            <person name="Millikan D."/>
            <person name="Schaefer A."/>
            <person name="Stabb E."/>
            <person name="Stevens A."/>
            <person name="Visick K."/>
            <person name="Whistler C."/>
            <person name="Greenberg E.P."/>
        </authorList>
    </citation>
    <scope>NUCLEOTIDE SEQUENCE [LARGE SCALE GENOMIC DNA]</scope>
    <source>
        <strain>ATCC 700601 / ES114</strain>
    </source>
</reference>
<sequence>MSEIKMPEFLTVESALKDSGLAVTPSELHGLLVGMISGGLSLDDQTWKPLIYDYTNDGMGWPDSAIKVGSAVFQCTVAELTAEKLALELLIPSEKESLMNRADGLSEWVNHFISGLGLVELKLDKTSDALKEALADLEEIARLGIDEEDDLEEQESLFEQIVEHVRICVLTIHAELGQQIHTDASKTVH</sequence>
<comment type="similarity">
    <text evidence="1">Belongs to the UPF0149 family.</text>
</comment>
<keyword id="KW-1185">Reference proteome</keyword>
<gene>
    <name type="ordered locus">VF_2102</name>
</gene>
<evidence type="ECO:0000255" key="1">
    <source>
        <dbReference type="HAMAP-Rule" id="MF_00346"/>
    </source>
</evidence>
<proteinExistence type="inferred from homology"/>
<protein>
    <recommendedName>
        <fullName evidence="1">UPF0149 protein VF_2102</fullName>
    </recommendedName>
</protein>
<name>Y2102_ALIF1</name>